<sequence length="253" mass="27633">MANLGCWMLVLFVATWSDLGLCKKRPKPGGWNTGGSRYPGQGSPGGNRYPPQGGGGWGQPHGGGWGQPHGGGWGQPHGGGWGQPHGGGWGQGGGTHSQWNKPSKPKTNMKHMAGAAAAGAVVGGLGGYMLGSAMSRPIIHFGSDYEDRYYRENMHRYPNQVYYRPMDQYSSQNNFVHDCVNITIKQHTVTTTTKGENFTETDVKMMERVVEQMCITQYERESQAYYQRGSSMVLFSSPPVILLISFLIFLIVG</sequence>
<dbReference type="EMBL" id="U08308">
    <property type="protein sequence ID" value="AAC50096.1"/>
    <property type="molecule type" value="Genomic_DNA"/>
</dbReference>
<dbReference type="PIR" id="S53635">
    <property type="entry name" value="S53635"/>
</dbReference>
<dbReference type="BMRB" id="P61767"/>
<dbReference type="SMR" id="P61767"/>
<dbReference type="GlyCosmos" id="P61767">
    <property type="glycosylation" value="2 sites, No reported glycans"/>
</dbReference>
<dbReference type="GO" id="GO:0005794">
    <property type="term" value="C:Golgi apparatus"/>
    <property type="evidence" value="ECO:0007669"/>
    <property type="project" value="UniProtKB-SubCell"/>
</dbReference>
<dbReference type="GO" id="GO:0005886">
    <property type="term" value="C:plasma membrane"/>
    <property type="evidence" value="ECO:0007669"/>
    <property type="project" value="UniProtKB-SubCell"/>
</dbReference>
<dbReference type="GO" id="GO:0098552">
    <property type="term" value="C:side of membrane"/>
    <property type="evidence" value="ECO:0007669"/>
    <property type="project" value="UniProtKB-KW"/>
</dbReference>
<dbReference type="GO" id="GO:0005507">
    <property type="term" value="F:copper ion binding"/>
    <property type="evidence" value="ECO:0000250"/>
    <property type="project" value="UniProtKB"/>
</dbReference>
<dbReference type="GO" id="GO:0051260">
    <property type="term" value="P:protein homooligomerization"/>
    <property type="evidence" value="ECO:0007669"/>
    <property type="project" value="InterPro"/>
</dbReference>
<dbReference type="FunFam" id="1.10.790.10:FF:000001">
    <property type="entry name" value="Major prion protein"/>
    <property type="match status" value="1"/>
</dbReference>
<dbReference type="Gene3D" id="1.10.790.10">
    <property type="entry name" value="Prion/Doppel protein, beta-ribbon domain"/>
    <property type="match status" value="1"/>
</dbReference>
<dbReference type="InterPro" id="IPR000817">
    <property type="entry name" value="Prion"/>
</dbReference>
<dbReference type="InterPro" id="IPR036924">
    <property type="entry name" value="Prion/Doppel_b-ribbon_dom_sf"/>
</dbReference>
<dbReference type="InterPro" id="IPR022416">
    <property type="entry name" value="Prion/Doppel_prot_b-ribbon_dom"/>
</dbReference>
<dbReference type="InterPro" id="IPR020949">
    <property type="entry name" value="Prion_copper_b_octapeptide"/>
</dbReference>
<dbReference type="InterPro" id="IPR025860">
    <property type="entry name" value="Prion_N"/>
</dbReference>
<dbReference type="PANTHER" id="PTHR15506">
    <property type="entry name" value="DOPPEL PRION"/>
    <property type="match status" value="1"/>
</dbReference>
<dbReference type="PANTHER" id="PTHR15506:SF2">
    <property type="entry name" value="MAJOR PRION PROTEIN"/>
    <property type="match status" value="1"/>
</dbReference>
<dbReference type="Pfam" id="PF00377">
    <property type="entry name" value="Prion"/>
    <property type="match status" value="1"/>
</dbReference>
<dbReference type="Pfam" id="PF11587">
    <property type="entry name" value="Prion_bPrPp"/>
    <property type="match status" value="1"/>
</dbReference>
<dbReference type="Pfam" id="PF03991">
    <property type="entry name" value="Prion_octapep"/>
    <property type="match status" value="1"/>
</dbReference>
<dbReference type="PRINTS" id="PR00341">
    <property type="entry name" value="PRION"/>
</dbReference>
<dbReference type="SMART" id="SM00157">
    <property type="entry name" value="PRP"/>
    <property type="match status" value="1"/>
</dbReference>
<dbReference type="SUPFAM" id="SSF54098">
    <property type="entry name" value="Prion-like"/>
    <property type="match status" value="1"/>
</dbReference>
<dbReference type="PROSITE" id="PS00291">
    <property type="entry name" value="PRION_1"/>
    <property type="match status" value="1"/>
</dbReference>
<dbReference type="PROSITE" id="PS00706">
    <property type="entry name" value="PRION_2"/>
    <property type="match status" value="1"/>
</dbReference>
<protein>
    <recommendedName>
        <fullName>Major prion protein</fullName>
        <shortName>PrP</shortName>
    </recommendedName>
    <alternativeName>
        <fullName>PrP27-30</fullName>
    </alternativeName>
    <alternativeName>
        <fullName>PrP33-35C</fullName>
    </alternativeName>
    <cdAntigenName>CD230</cdAntigenName>
</protein>
<evidence type="ECO:0000250" key="1"/>
<evidence type="ECO:0000250" key="2">
    <source>
        <dbReference type="UniProtKB" id="P04156"/>
    </source>
</evidence>
<evidence type="ECO:0000250" key="3">
    <source>
        <dbReference type="UniProtKB" id="P04273"/>
    </source>
</evidence>
<evidence type="ECO:0000250" key="4">
    <source>
        <dbReference type="UniProtKB" id="P04925"/>
    </source>
</evidence>
<evidence type="ECO:0000255" key="5"/>
<evidence type="ECO:0000256" key="6">
    <source>
        <dbReference type="SAM" id="MobiDB-lite"/>
    </source>
</evidence>
<evidence type="ECO:0000305" key="7"/>
<comment type="function">
    <text evidence="2 4">Its primary physiological function is unclear. Has cytoprotective activity against internal or environmental stresses. May play a role in neuronal development and synaptic plasticity. May be required for neuronal myelin sheath maintenance. May play a role in iron uptake and iron homeostasis. Soluble oligomers are toxic to cultured neuroblastoma cells and induce apoptosis (in vitro). Association with GPC1 (via its heparan sulfate chains) targets PRNP to lipid rafts. Also provides Cu(2+) or Zn(2+) for the ascorbate-mediated GPC1 deaminase degradation of its heparan sulfate side chains (By similarity).</text>
</comment>
<comment type="subunit">
    <text evidence="2 4">Monomer and homodimer. Has a tendency to aggregate into amyloid fibrils containing a cross-beta spine, formed by a steric zipper of superposed beta-strands. Soluble oligomers may represent an intermediate stage on the path to fibril formation. Copper binding may promote oligomerization. Interacts with GRB2, APP, ERI3/PRNPIP and SYN1. Mislocalized cytosolically exposed PrP interacts with MGRN1; this interaction alters MGRN1 subcellular location and causes lysosomal enlargement. Interacts with KIAA1191.</text>
</comment>
<comment type="subcellular location">
    <subcellularLocation>
        <location evidence="2">Cell membrane</location>
        <topology evidence="2">Lipid-anchor</topology>
        <topology evidence="2">GPI-anchor</topology>
    </subcellularLocation>
    <subcellularLocation>
        <location evidence="4">Golgi apparatus</location>
    </subcellularLocation>
    <text evidence="2">Targeted to lipid rafts via association with the heparan sulfate chains of GPC1. Colocates, in the presence of Cu(2+), to vesicles in para- and perinuclear regions, where both proteins undergo internalization. Heparin displaces PRNP from lipid rafts and promotes endocytosis.</text>
</comment>
<comment type="domain">
    <text evidence="2">The normal, monomeric form has a mainly alpha-helical structure. The disease-associated, protease-resistant form forms amyloid fibrils containing a cross-beta spine, formed by a steric zipper of superposed beta-strands. Disease mutations may favor intermolecular contacts via short beta strands, and may thereby trigger oligomerization.</text>
</comment>
<comment type="domain">
    <text evidence="2">Contains an N-terminal region composed of octamer repeats. At low copper concentrations, the sidechains of His residues from three or four repeats contribute to the binding of a single copper ion. Alternatively, a copper ion can be bound by interaction with the sidechain and backbone amide nitrogen of a single His residue. The observed copper binding stoichiometry suggests that two repeat regions cooperate to stabilize the binding of a single copper ion. At higher copper concentrations, each octamer can bind one copper ion by interactions with the His sidechain and Gly backbone atoms. A mixture of binding types may occur, especially in the case of octamer repeat expansion. Copper binding may stabilize the conformation of this region and may promote oligomerization.</text>
</comment>
<comment type="disease">
    <text evidence="7">PrP is found in high quantity in the brain of humans and animals infected with the degenerative neurological diseases kuru, Creutzfeldt-Jakob disease (CJD), Gerstmann-Straussler syndrome (GSS), scrapie, bovine spongiform encephalopathy (BSE), transmissible mink encephalopathy (TME), etc.</text>
</comment>
<comment type="similarity">
    <text evidence="7">Belongs to the prion family.</text>
</comment>
<accession>P61767</accession>
<accession>P40253</accession>
<reference key="1">
    <citation type="journal article" date="1995" name="J. Mol. Biol.">
        <title>Prion protein gene variation among primates.</title>
        <authorList>
            <person name="Schaetzl H.M."/>
            <person name="Da Costa M."/>
            <person name="Taylor L."/>
            <person name="Cohen F.E."/>
            <person name="Prusiner S.B."/>
        </authorList>
    </citation>
    <scope>NUCLEOTIDE SEQUENCE [GENOMIC DNA]</scope>
</reference>
<gene>
    <name type="primary">PRNP</name>
    <name type="synonym">PRP</name>
</gene>
<name>PRIO_SYMSY</name>
<proteinExistence type="inferred from homology"/>
<keyword id="KW-0034">Amyloid</keyword>
<keyword id="KW-1003">Cell membrane</keyword>
<keyword id="KW-0186">Copper</keyword>
<keyword id="KW-1015">Disulfide bond</keyword>
<keyword id="KW-0325">Glycoprotein</keyword>
<keyword id="KW-0333">Golgi apparatus</keyword>
<keyword id="KW-0336">GPI-anchor</keyword>
<keyword id="KW-0449">Lipoprotein</keyword>
<keyword id="KW-0472">Membrane</keyword>
<keyword id="KW-0479">Metal-binding</keyword>
<keyword id="KW-0640">Prion</keyword>
<keyword id="KW-0677">Repeat</keyword>
<keyword id="KW-0732">Signal</keyword>
<keyword id="KW-0862">Zinc</keyword>
<organism>
    <name type="scientific">Symphalangus syndactylus</name>
    <name type="common">Siamang</name>
    <name type="synonym">Hylobates syndactylus</name>
    <dbReference type="NCBI Taxonomy" id="9590"/>
    <lineage>
        <taxon>Eukaryota</taxon>
        <taxon>Metazoa</taxon>
        <taxon>Chordata</taxon>
        <taxon>Craniata</taxon>
        <taxon>Vertebrata</taxon>
        <taxon>Euteleostomi</taxon>
        <taxon>Mammalia</taxon>
        <taxon>Eutheria</taxon>
        <taxon>Euarchontoglires</taxon>
        <taxon>Primates</taxon>
        <taxon>Haplorrhini</taxon>
        <taxon>Catarrhini</taxon>
        <taxon>Hylobatidae</taxon>
        <taxon>Symphalangus</taxon>
    </lineage>
</organism>
<feature type="signal peptide" evidence="1">
    <location>
        <begin position="1"/>
        <end position="22"/>
    </location>
</feature>
<feature type="chain" id="PRO_0000025679" description="Major prion protein">
    <location>
        <begin position="23"/>
        <end position="230"/>
    </location>
</feature>
<feature type="propeptide" id="PRO_0000025680" description="Removed in mature form" evidence="1">
    <location>
        <begin position="231"/>
        <end position="253"/>
    </location>
</feature>
<feature type="repeat" description="1">
    <location>
        <begin position="51"/>
        <end position="59"/>
    </location>
</feature>
<feature type="repeat" description="2">
    <location>
        <begin position="60"/>
        <end position="67"/>
    </location>
</feature>
<feature type="repeat" description="3">
    <location>
        <begin position="68"/>
        <end position="75"/>
    </location>
</feature>
<feature type="repeat" description="4">
    <location>
        <begin position="76"/>
        <end position="83"/>
    </location>
</feature>
<feature type="repeat" description="5">
    <location>
        <begin position="84"/>
        <end position="91"/>
    </location>
</feature>
<feature type="region of interest" description="Interaction with GRB2, ERI3 and SYN1" evidence="4">
    <location>
        <begin position="23"/>
        <end position="230"/>
    </location>
</feature>
<feature type="region of interest" description="Disordered" evidence="6">
    <location>
        <begin position="26"/>
        <end position="108"/>
    </location>
</feature>
<feature type="region of interest" description="5 X 8 AA tandem repeats of P-H-G-G-G-W-G-Q">
    <location>
        <begin position="51"/>
        <end position="91"/>
    </location>
</feature>
<feature type="compositionally biased region" description="Gly residues" evidence="6">
    <location>
        <begin position="52"/>
        <end position="95"/>
    </location>
</feature>
<feature type="binding site" evidence="2">
    <location>
        <position position="61"/>
    </location>
    <ligand>
        <name>Cu(2+)</name>
        <dbReference type="ChEBI" id="CHEBI:29036"/>
        <label>1</label>
    </ligand>
</feature>
<feature type="binding site" evidence="2">
    <location>
        <position position="62"/>
    </location>
    <ligand>
        <name>Cu(2+)</name>
        <dbReference type="ChEBI" id="CHEBI:29036"/>
        <label>1</label>
    </ligand>
</feature>
<feature type="binding site" evidence="2">
    <location>
        <position position="63"/>
    </location>
    <ligand>
        <name>Cu(2+)</name>
        <dbReference type="ChEBI" id="CHEBI:29036"/>
        <label>1</label>
    </ligand>
</feature>
<feature type="binding site" evidence="2">
    <location>
        <position position="69"/>
    </location>
    <ligand>
        <name>Cu(2+)</name>
        <dbReference type="ChEBI" id="CHEBI:29036"/>
        <label>2</label>
    </ligand>
</feature>
<feature type="binding site" evidence="2">
    <location>
        <position position="70"/>
    </location>
    <ligand>
        <name>Cu(2+)</name>
        <dbReference type="ChEBI" id="CHEBI:29036"/>
        <label>2</label>
    </ligand>
</feature>
<feature type="binding site" evidence="2">
    <location>
        <position position="71"/>
    </location>
    <ligand>
        <name>Cu(2+)</name>
        <dbReference type="ChEBI" id="CHEBI:29036"/>
        <label>2</label>
    </ligand>
</feature>
<feature type="binding site" evidence="2">
    <location>
        <position position="77"/>
    </location>
    <ligand>
        <name>Cu(2+)</name>
        <dbReference type="ChEBI" id="CHEBI:29036"/>
        <label>3</label>
    </ligand>
</feature>
<feature type="binding site" evidence="2">
    <location>
        <position position="78"/>
    </location>
    <ligand>
        <name>Cu(2+)</name>
        <dbReference type="ChEBI" id="CHEBI:29036"/>
        <label>3</label>
    </ligand>
</feature>
<feature type="binding site" evidence="2">
    <location>
        <position position="79"/>
    </location>
    <ligand>
        <name>Cu(2+)</name>
        <dbReference type="ChEBI" id="CHEBI:29036"/>
        <label>3</label>
    </ligand>
</feature>
<feature type="binding site" evidence="2">
    <location>
        <position position="85"/>
    </location>
    <ligand>
        <name>Cu(2+)</name>
        <dbReference type="ChEBI" id="CHEBI:29036"/>
        <label>4</label>
    </ligand>
</feature>
<feature type="binding site" evidence="2">
    <location>
        <position position="86"/>
    </location>
    <ligand>
        <name>Cu(2+)</name>
        <dbReference type="ChEBI" id="CHEBI:29036"/>
        <label>4</label>
    </ligand>
</feature>
<feature type="binding site" evidence="2">
    <location>
        <position position="87"/>
    </location>
    <ligand>
        <name>Cu(2+)</name>
        <dbReference type="ChEBI" id="CHEBI:29036"/>
        <label>4</label>
    </ligand>
</feature>
<feature type="lipid moiety-binding region" description="GPI-anchor amidated serine" evidence="3">
    <location>
        <position position="230"/>
    </location>
</feature>
<feature type="glycosylation site" description="N-linked (GlcNAc...) asparagine" evidence="5">
    <location>
        <position position="181"/>
    </location>
</feature>
<feature type="glycosylation site" description="N-linked (GlcNAc...) asparagine" evidence="5">
    <location>
        <position position="197"/>
    </location>
</feature>
<feature type="disulfide bond" evidence="3">
    <location>
        <begin position="179"/>
        <end position="214"/>
    </location>
</feature>